<protein>
    <recommendedName>
        <fullName evidence="1">Phosphoribosyl-ATP pyrophosphatase</fullName>
        <shortName evidence="1">PRA-PH</shortName>
        <ecNumber evidence="1">3.6.1.31</ecNumber>
    </recommendedName>
</protein>
<organism>
    <name type="scientific">Metallosphaera sedula (strain ATCC 51363 / DSM 5348 / JCM 9185 / NBRC 15509 / TH2)</name>
    <dbReference type="NCBI Taxonomy" id="399549"/>
    <lineage>
        <taxon>Archaea</taxon>
        <taxon>Thermoproteota</taxon>
        <taxon>Thermoprotei</taxon>
        <taxon>Sulfolobales</taxon>
        <taxon>Sulfolobaceae</taxon>
        <taxon>Metallosphaera</taxon>
    </lineage>
</organism>
<keyword id="KW-0028">Amino-acid biosynthesis</keyword>
<keyword id="KW-0067">ATP-binding</keyword>
<keyword id="KW-0963">Cytoplasm</keyword>
<keyword id="KW-0368">Histidine biosynthesis</keyword>
<keyword id="KW-0378">Hydrolase</keyword>
<keyword id="KW-0547">Nucleotide-binding</keyword>
<keyword id="KW-1185">Reference proteome</keyword>
<gene>
    <name evidence="1" type="primary">hisE</name>
    <name type="ordered locus">Msed_1948</name>
</gene>
<name>HIS2_METS5</name>
<proteinExistence type="inferred from homology"/>
<reference key="1">
    <citation type="journal article" date="2008" name="Appl. Environ. Microbiol.">
        <title>The genome sequence of the metal-mobilizing, extremely thermoacidophilic archaeon Metallosphaera sedula provides insights into bioleaching-associated metabolism.</title>
        <authorList>
            <person name="Auernik K.S."/>
            <person name="Maezato Y."/>
            <person name="Blum P.H."/>
            <person name="Kelly R.M."/>
        </authorList>
    </citation>
    <scope>NUCLEOTIDE SEQUENCE [LARGE SCALE GENOMIC DNA]</scope>
    <source>
        <strain>ATCC 51363 / DSM 5348 / JCM 9185 / NBRC 15509 / TH2</strain>
    </source>
</reference>
<comment type="catalytic activity">
    <reaction evidence="1">
        <text>1-(5-phospho-beta-D-ribosyl)-ATP + H2O = 1-(5-phospho-beta-D-ribosyl)-5'-AMP + diphosphate + H(+)</text>
        <dbReference type="Rhea" id="RHEA:22828"/>
        <dbReference type="ChEBI" id="CHEBI:15377"/>
        <dbReference type="ChEBI" id="CHEBI:15378"/>
        <dbReference type="ChEBI" id="CHEBI:33019"/>
        <dbReference type="ChEBI" id="CHEBI:59457"/>
        <dbReference type="ChEBI" id="CHEBI:73183"/>
        <dbReference type="EC" id="3.6.1.31"/>
    </reaction>
</comment>
<comment type="pathway">
    <text evidence="1">Amino-acid biosynthesis; L-histidine biosynthesis; L-histidine from 5-phospho-alpha-D-ribose 1-diphosphate: step 2/9.</text>
</comment>
<comment type="subcellular location">
    <subcellularLocation>
        <location evidence="1">Cytoplasm</location>
    </subcellularLocation>
</comment>
<comment type="similarity">
    <text evidence="1">Belongs to the PRA-PH family.</text>
</comment>
<sequence length="93" mass="10362">MTDVLEELSGIIAQRLREMPEGSYTASLAKKGKGYVARKVGEEAVEVVVASLSEGRERVVSETADLIYHLLVLLAMEGISLDEVRDELRRRMK</sequence>
<dbReference type="EC" id="3.6.1.31" evidence="1"/>
<dbReference type="EMBL" id="CP000682">
    <property type="protein sequence ID" value="ABP96088.1"/>
    <property type="molecule type" value="Genomic_DNA"/>
</dbReference>
<dbReference type="RefSeq" id="WP_012021875.1">
    <property type="nucleotide sequence ID" value="NZ_CP139956.1"/>
</dbReference>
<dbReference type="SMR" id="A4YI36"/>
<dbReference type="STRING" id="399549.Msed_1948"/>
<dbReference type="GeneID" id="97612945"/>
<dbReference type="KEGG" id="mse:Msed_1948"/>
<dbReference type="eggNOG" id="arCOG02677">
    <property type="taxonomic scope" value="Archaea"/>
</dbReference>
<dbReference type="HOGENOM" id="CLU_123337_0_0_2"/>
<dbReference type="UniPathway" id="UPA00031">
    <property type="reaction ID" value="UER00007"/>
</dbReference>
<dbReference type="Proteomes" id="UP000000242">
    <property type="component" value="Chromosome"/>
</dbReference>
<dbReference type="GO" id="GO:0005737">
    <property type="term" value="C:cytoplasm"/>
    <property type="evidence" value="ECO:0007669"/>
    <property type="project" value="UniProtKB-SubCell"/>
</dbReference>
<dbReference type="GO" id="GO:0005524">
    <property type="term" value="F:ATP binding"/>
    <property type="evidence" value="ECO:0007669"/>
    <property type="project" value="UniProtKB-KW"/>
</dbReference>
<dbReference type="GO" id="GO:0004636">
    <property type="term" value="F:phosphoribosyl-ATP diphosphatase activity"/>
    <property type="evidence" value="ECO:0007669"/>
    <property type="project" value="UniProtKB-UniRule"/>
</dbReference>
<dbReference type="GO" id="GO:0000105">
    <property type="term" value="P:L-histidine biosynthetic process"/>
    <property type="evidence" value="ECO:0007669"/>
    <property type="project" value="UniProtKB-UniRule"/>
</dbReference>
<dbReference type="CDD" id="cd11534">
    <property type="entry name" value="NTP-PPase_HisIE_like"/>
    <property type="match status" value="1"/>
</dbReference>
<dbReference type="Gene3D" id="1.10.287.1080">
    <property type="entry name" value="MazG-like"/>
    <property type="match status" value="1"/>
</dbReference>
<dbReference type="HAMAP" id="MF_01020">
    <property type="entry name" value="HisE"/>
    <property type="match status" value="1"/>
</dbReference>
<dbReference type="InterPro" id="IPR008179">
    <property type="entry name" value="HisE"/>
</dbReference>
<dbReference type="InterPro" id="IPR021130">
    <property type="entry name" value="PRib-ATP_PPHydrolase-like"/>
</dbReference>
<dbReference type="NCBIfam" id="TIGR03188">
    <property type="entry name" value="histidine_hisI"/>
    <property type="match status" value="1"/>
</dbReference>
<dbReference type="PANTHER" id="PTHR42945">
    <property type="entry name" value="HISTIDINE BIOSYNTHESIS BIFUNCTIONAL PROTEIN"/>
    <property type="match status" value="1"/>
</dbReference>
<dbReference type="PANTHER" id="PTHR42945:SF1">
    <property type="entry name" value="HISTIDINE BIOSYNTHESIS BIFUNCTIONAL PROTEIN HIS7"/>
    <property type="match status" value="1"/>
</dbReference>
<dbReference type="Pfam" id="PF01503">
    <property type="entry name" value="PRA-PH"/>
    <property type="match status" value="1"/>
</dbReference>
<dbReference type="SUPFAM" id="SSF101386">
    <property type="entry name" value="all-alpha NTP pyrophosphatases"/>
    <property type="match status" value="1"/>
</dbReference>
<evidence type="ECO:0000255" key="1">
    <source>
        <dbReference type="HAMAP-Rule" id="MF_01020"/>
    </source>
</evidence>
<accession>A4YI36</accession>
<feature type="chain" id="PRO_1000072940" description="Phosphoribosyl-ATP pyrophosphatase">
    <location>
        <begin position="1"/>
        <end position="93"/>
    </location>
</feature>